<organism>
    <name type="scientific">Burkholderia pseudomallei (strain 1106a)</name>
    <dbReference type="NCBI Taxonomy" id="357348"/>
    <lineage>
        <taxon>Bacteria</taxon>
        <taxon>Pseudomonadati</taxon>
        <taxon>Pseudomonadota</taxon>
        <taxon>Betaproteobacteria</taxon>
        <taxon>Burkholderiales</taxon>
        <taxon>Burkholderiaceae</taxon>
        <taxon>Burkholderia</taxon>
        <taxon>pseudomallei group</taxon>
    </lineage>
</organism>
<keyword id="KW-0488">Methylation</keyword>
<keyword id="KW-0687">Ribonucleoprotein</keyword>
<keyword id="KW-0689">Ribosomal protein</keyword>
<keyword id="KW-0694">RNA-binding</keyword>
<keyword id="KW-0699">rRNA-binding</keyword>
<keyword id="KW-0820">tRNA-binding</keyword>
<sequence length="126" mass="13942">MPTINQLVRKGRASETTKSKSPALQDCPQRRGVCTRVYTTTPKKPNSALRKVAKVRLTNGFEVISYIGGEGHNLQEHSVVLIRGGRVKDLPGVRYHMVRGSLDTQGVKDRKQARSKYGAKRAKAAK</sequence>
<name>RS12_BURP0</name>
<reference key="1">
    <citation type="journal article" date="2010" name="Genome Biol. Evol.">
        <title>Continuing evolution of Burkholderia mallei through genome reduction and large-scale rearrangements.</title>
        <authorList>
            <person name="Losada L."/>
            <person name="Ronning C.M."/>
            <person name="DeShazer D."/>
            <person name="Woods D."/>
            <person name="Fedorova N."/>
            <person name="Kim H.S."/>
            <person name="Shabalina S.A."/>
            <person name="Pearson T.R."/>
            <person name="Brinkac L."/>
            <person name="Tan P."/>
            <person name="Nandi T."/>
            <person name="Crabtree J."/>
            <person name="Badger J."/>
            <person name="Beckstrom-Sternberg S."/>
            <person name="Saqib M."/>
            <person name="Schutzer S.E."/>
            <person name="Keim P."/>
            <person name="Nierman W.C."/>
        </authorList>
    </citation>
    <scope>NUCLEOTIDE SEQUENCE [LARGE SCALE GENOMIC DNA]</scope>
    <source>
        <strain>1106a</strain>
    </source>
</reference>
<evidence type="ECO:0000250" key="1"/>
<evidence type="ECO:0000255" key="2">
    <source>
        <dbReference type="HAMAP-Rule" id="MF_00403"/>
    </source>
</evidence>
<evidence type="ECO:0000256" key="3">
    <source>
        <dbReference type="SAM" id="MobiDB-lite"/>
    </source>
</evidence>
<evidence type="ECO:0000305" key="4"/>
<gene>
    <name evidence="2" type="primary">rpsL</name>
    <name type="ordered locus">BURPS1106A_3809</name>
</gene>
<comment type="function">
    <text evidence="2">With S4 and S5 plays an important role in translational accuracy.</text>
</comment>
<comment type="function">
    <text evidence="2">Interacts with and stabilizes bases of the 16S rRNA that are involved in tRNA selection in the A site and with the mRNA backbone. Located at the interface of the 30S and 50S subunits, it traverses the body of the 30S subunit contacting proteins on the other side and probably holding the rRNA structure together. The combined cluster of proteins S8, S12 and S17 appears to hold together the shoulder and platform of the 30S subunit.</text>
</comment>
<comment type="subunit">
    <text evidence="2">Part of the 30S ribosomal subunit. Contacts proteins S8 and S17. May interact with IF1 in the 30S initiation complex.</text>
</comment>
<comment type="similarity">
    <text evidence="2">Belongs to the universal ribosomal protein uS12 family.</text>
</comment>
<proteinExistence type="inferred from homology"/>
<dbReference type="EMBL" id="CP000572">
    <property type="protein sequence ID" value="ABN91990.1"/>
    <property type="molecule type" value="Genomic_DNA"/>
</dbReference>
<dbReference type="RefSeq" id="WP_004521903.1">
    <property type="nucleotide sequence ID" value="NC_009076.1"/>
</dbReference>
<dbReference type="SMR" id="A3P0B8"/>
<dbReference type="GeneID" id="93061837"/>
<dbReference type="KEGG" id="bpl:BURPS1106A_3809"/>
<dbReference type="HOGENOM" id="CLU_104295_1_2_4"/>
<dbReference type="Proteomes" id="UP000006738">
    <property type="component" value="Chromosome I"/>
</dbReference>
<dbReference type="GO" id="GO:0015935">
    <property type="term" value="C:small ribosomal subunit"/>
    <property type="evidence" value="ECO:0007669"/>
    <property type="project" value="InterPro"/>
</dbReference>
<dbReference type="GO" id="GO:0019843">
    <property type="term" value="F:rRNA binding"/>
    <property type="evidence" value="ECO:0007669"/>
    <property type="project" value="UniProtKB-UniRule"/>
</dbReference>
<dbReference type="GO" id="GO:0003735">
    <property type="term" value="F:structural constituent of ribosome"/>
    <property type="evidence" value="ECO:0007669"/>
    <property type="project" value="InterPro"/>
</dbReference>
<dbReference type="GO" id="GO:0000049">
    <property type="term" value="F:tRNA binding"/>
    <property type="evidence" value="ECO:0007669"/>
    <property type="project" value="UniProtKB-UniRule"/>
</dbReference>
<dbReference type="GO" id="GO:0006412">
    <property type="term" value="P:translation"/>
    <property type="evidence" value="ECO:0007669"/>
    <property type="project" value="UniProtKB-UniRule"/>
</dbReference>
<dbReference type="CDD" id="cd03368">
    <property type="entry name" value="Ribosomal_S12"/>
    <property type="match status" value="1"/>
</dbReference>
<dbReference type="FunFam" id="2.40.50.140:FF:000001">
    <property type="entry name" value="30S ribosomal protein S12"/>
    <property type="match status" value="1"/>
</dbReference>
<dbReference type="Gene3D" id="2.40.50.140">
    <property type="entry name" value="Nucleic acid-binding proteins"/>
    <property type="match status" value="1"/>
</dbReference>
<dbReference type="HAMAP" id="MF_00403_B">
    <property type="entry name" value="Ribosomal_uS12_B"/>
    <property type="match status" value="1"/>
</dbReference>
<dbReference type="InterPro" id="IPR012340">
    <property type="entry name" value="NA-bd_OB-fold"/>
</dbReference>
<dbReference type="InterPro" id="IPR006032">
    <property type="entry name" value="Ribosomal_uS12"/>
</dbReference>
<dbReference type="InterPro" id="IPR005679">
    <property type="entry name" value="Ribosomal_uS12_bac"/>
</dbReference>
<dbReference type="NCBIfam" id="TIGR00981">
    <property type="entry name" value="rpsL_bact"/>
    <property type="match status" value="1"/>
</dbReference>
<dbReference type="PANTHER" id="PTHR11652">
    <property type="entry name" value="30S RIBOSOMAL PROTEIN S12 FAMILY MEMBER"/>
    <property type="match status" value="1"/>
</dbReference>
<dbReference type="Pfam" id="PF00164">
    <property type="entry name" value="Ribosom_S12_S23"/>
    <property type="match status" value="1"/>
</dbReference>
<dbReference type="PIRSF" id="PIRSF002133">
    <property type="entry name" value="Ribosomal_S12/S23"/>
    <property type="match status" value="1"/>
</dbReference>
<dbReference type="PRINTS" id="PR01034">
    <property type="entry name" value="RIBOSOMALS12"/>
</dbReference>
<dbReference type="SUPFAM" id="SSF50249">
    <property type="entry name" value="Nucleic acid-binding proteins"/>
    <property type="match status" value="1"/>
</dbReference>
<dbReference type="PROSITE" id="PS00055">
    <property type="entry name" value="RIBOSOMAL_S12"/>
    <property type="match status" value="1"/>
</dbReference>
<protein>
    <recommendedName>
        <fullName evidence="2">Small ribosomal subunit protein uS12</fullName>
    </recommendedName>
    <alternativeName>
        <fullName evidence="4">30S ribosomal protein S12</fullName>
    </alternativeName>
</protein>
<accession>A3P0B8</accession>
<feature type="chain" id="PRO_0000295962" description="Small ribosomal subunit protein uS12">
    <location>
        <begin position="1"/>
        <end position="126"/>
    </location>
</feature>
<feature type="region of interest" description="Disordered" evidence="3">
    <location>
        <begin position="1"/>
        <end position="26"/>
    </location>
</feature>
<feature type="region of interest" description="Disordered" evidence="3">
    <location>
        <begin position="101"/>
        <end position="126"/>
    </location>
</feature>
<feature type="compositionally biased region" description="Basic residues" evidence="3">
    <location>
        <begin position="113"/>
        <end position="126"/>
    </location>
</feature>
<feature type="modified residue" description="3-methylthioaspartic acid" evidence="1">
    <location>
        <position position="89"/>
    </location>
</feature>